<feature type="chain" id="PRO_0000252419" description="UPF0449 protein C19orf25 homolog">
    <location>
        <begin position="1"/>
        <end position="118"/>
    </location>
</feature>
<feature type="coiled-coil region" evidence="2">
    <location>
        <begin position="69"/>
        <end position="105"/>
    </location>
</feature>
<feature type="modified residue" description="Phosphotyrosine" evidence="1">
    <location>
        <position position="63"/>
    </location>
</feature>
<sequence length="118" mass="12819">MGSKAKKRVVLPTRPAPPTVEQILEDVRGAPAEDPVFTALAREDPLGPSGRTEDAEAQREQLYFQSRIYVAMNQRLQQAGAQLEQKRADLQQAGEELERDISQVGHVALPSTAAASLG</sequence>
<name>CS025_BOVIN</name>
<keyword id="KW-0175">Coiled coil</keyword>
<keyword id="KW-0597">Phosphoprotein</keyword>
<keyword id="KW-1185">Reference proteome</keyword>
<reference key="1">
    <citation type="submission" date="2006-05" db="EMBL/GenBank/DDBJ databases">
        <authorList>
            <consortium name="NIH - Mammalian Gene Collection (MGC) project"/>
        </authorList>
    </citation>
    <scope>NUCLEOTIDE SEQUENCE [LARGE SCALE MRNA]</scope>
    <source>
        <strain>Hereford</strain>
        <tissue>Ascending colon</tissue>
    </source>
</reference>
<comment type="similarity">
    <text evidence="3">Belongs to the UPF0449 family.</text>
</comment>
<protein>
    <recommendedName>
        <fullName>UPF0449 protein C19orf25 homolog</fullName>
    </recommendedName>
</protein>
<organism>
    <name type="scientific">Bos taurus</name>
    <name type="common">Bovine</name>
    <dbReference type="NCBI Taxonomy" id="9913"/>
    <lineage>
        <taxon>Eukaryota</taxon>
        <taxon>Metazoa</taxon>
        <taxon>Chordata</taxon>
        <taxon>Craniata</taxon>
        <taxon>Vertebrata</taxon>
        <taxon>Euteleostomi</taxon>
        <taxon>Mammalia</taxon>
        <taxon>Eutheria</taxon>
        <taxon>Laurasiatheria</taxon>
        <taxon>Artiodactyla</taxon>
        <taxon>Ruminantia</taxon>
        <taxon>Pecora</taxon>
        <taxon>Bovidae</taxon>
        <taxon>Bovinae</taxon>
        <taxon>Bos</taxon>
    </lineage>
</organism>
<proteinExistence type="inferred from homology"/>
<evidence type="ECO:0000250" key="1">
    <source>
        <dbReference type="UniProtKB" id="Q9D7E4"/>
    </source>
</evidence>
<evidence type="ECO:0000255" key="2"/>
<evidence type="ECO:0000305" key="3"/>
<dbReference type="EMBL" id="BC116031">
    <property type="protein sequence ID" value="AAI16032.1"/>
    <property type="molecule type" value="mRNA"/>
</dbReference>
<dbReference type="RefSeq" id="NP_001068848.1">
    <property type="nucleotide sequence ID" value="NM_001075380.1"/>
</dbReference>
<dbReference type="RefSeq" id="XP_024849822.1">
    <property type="nucleotide sequence ID" value="XM_024994054.2"/>
</dbReference>
<dbReference type="SMR" id="Q1LZF3"/>
<dbReference type="FunCoup" id="Q1LZF3">
    <property type="interactions" value="651"/>
</dbReference>
<dbReference type="STRING" id="9913.ENSBTAP00000061091"/>
<dbReference type="PaxDb" id="9913-ENSBTAP00000056539"/>
<dbReference type="Ensembl" id="ENSBTAT00000072277.1">
    <property type="protein sequence ID" value="ENSBTAP00000061091.1"/>
    <property type="gene ID" value="ENSBTAG00000051357.2"/>
</dbReference>
<dbReference type="GeneID" id="508965"/>
<dbReference type="KEGG" id="bta:508965"/>
<dbReference type="CTD" id="299612"/>
<dbReference type="VEuPathDB" id="HostDB:ENSBTAG00000051357"/>
<dbReference type="VGNC" id="VGNC:52727">
    <property type="gene designation" value="C7H19orf25"/>
</dbReference>
<dbReference type="eggNOG" id="ENOG502SDTN">
    <property type="taxonomic scope" value="Eukaryota"/>
</dbReference>
<dbReference type="GeneTree" id="ENSGT01030000235617"/>
<dbReference type="HOGENOM" id="CLU_141103_1_0_1"/>
<dbReference type="InParanoid" id="Q1LZF3"/>
<dbReference type="OMA" id="RFQQCRR"/>
<dbReference type="OrthoDB" id="6129359at2759"/>
<dbReference type="TreeFam" id="TF330719"/>
<dbReference type="Proteomes" id="UP000009136">
    <property type="component" value="Chromosome 7"/>
</dbReference>
<dbReference type="Bgee" id="ENSBTAG00000051357">
    <property type="expression patterns" value="Expressed in retina and 103 other cell types or tissues"/>
</dbReference>
<dbReference type="InterPro" id="IPR028227">
    <property type="entry name" value="UPF0449"/>
</dbReference>
<dbReference type="PANTHER" id="PTHR34766">
    <property type="entry name" value="UPF0449 PROTEIN C19ORF25"/>
    <property type="match status" value="1"/>
</dbReference>
<dbReference type="PANTHER" id="PTHR34766:SF1">
    <property type="entry name" value="UPF0449 PROTEIN C19ORF25"/>
    <property type="match status" value="1"/>
</dbReference>
<dbReference type="Pfam" id="PF15136">
    <property type="entry name" value="UPF0449"/>
    <property type="match status" value="1"/>
</dbReference>
<accession>Q1LZF3</accession>